<feature type="chain" id="PRO_0000342188" description="Voltage-gated hydrogen channel 1">
    <location>
        <begin position="1"/>
        <end position="269"/>
    </location>
</feature>
<feature type="topological domain" description="Cytoplasmic" evidence="2">
    <location>
        <begin position="1"/>
        <end position="96"/>
    </location>
</feature>
<feature type="transmembrane region" description="Helical; Name=Segment S1">
    <location>
        <begin position="97"/>
        <end position="117"/>
    </location>
</feature>
<feature type="topological domain" description="Extracellular" evidence="2">
    <location>
        <begin position="118"/>
        <end position="134"/>
    </location>
</feature>
<feature type="transmembrane region" description="Helical; Name=Segment S2">
    <location>
        <begin position="135"/>
        <end position="157"/>
    </location>
</feature>
<feature type="topological domain" description="Cytoplasmic" evidence="2">
    <location>
        <begin position="158"/>
        <end position="165"/>
    </location>
</feature>
<feature type="transmembrane region" description="Helical; Name=Segment S3">
    <location>
        <begin position="166"/>
        <end position="186"/>
    </location>
</feature>
<feature type="topological domain" description="Extracellular" evidence="2">
    <location>
        <begin position="187"/>
        <end position="193"/>
    </location>
</feature>
<feature type="transmembrane region" description="Helical; Name=Segment S4">
    <location>
        <begin position="194"/>
        <end position="214"/>
    </location>
</feature>
<feature type="topological domain" description="Cytoplasmic" evidence="2">
    <location>
        <begin position="215"/>
        <end position="269"/>
    </location>
</feature>
<feature type="region of interest" description="Disordered" evidence="3">
    <location>
        <begin position="46"/>
        <end position="79"/>
    </location>
</feature>
<feature type="coiled-coil region" evidence="7 8">
    <location>
        <begin position="221"/>
        <end position="261"/>
    </location>
</feature>
<feature type="modified residue" description="Phosphothreonine" evidence="1">
    <location>
        <position position="29"/>
    </location>
</feature>
<feature type="modified residue" description="Phosphoserine" evidence="1">
    <location>
        <position position="93"/>
    </location>
</feature>
<feature type="mutagenesis site" description="Faster channel activation kinetics." evidence="4">
    <original>R</original>
    <variation>Q</variation>
    <location>
        <position position="201"/>
    </location>
</feature>
<feature type="mutagenesis site" description="Same activation kinetics as wild-type." evidence="4">
    <original>R</original>
    <variation>Q</variation>
    <location>
        <position position="207"/>
    </location>
</feature>
<feature type="mutagenesis site" description="Impairs gating cooperativity." evidence="7">
    <original>VKT</original>
    <variation>GGG</variation>
    <location>
        <begin position="216"/>
        <end position="218"/>
    </location>
</feature>
<feature type="mutagenesis site" description="Slows channel activation." evidence="7">
    <original>INI</original>
    <variation>NIN</variation>
    <location>
        <begin position="230"/>
        <end position="232"/>
    </location>
</feature>
<feature type="mutagenesis site" description="No effect on channel activation kinetics." evidence="7">
    <original>N</original>
    <variation>L</variation>
    <location>
        <position position="231"/>
    </location>
</feature>
<feature type="sequence conflict" description="In Ref. 1; BAE33062." evidence="14" ref="1">
    <original>E</original>
    <variation>A</variation>
    <location>
        <position position="66"/>
    </location>
</feature>
<feature type="helix" evidence="17">
    <location>
        <begin position="87"/>
        <end position="90"/>
    </location>
</feature>
<feature type="helix" evidence="17">
    <location>
        <begin position="96"/>
        <end position="120"/>
    </location>
</feature>
<feature type="helix" evidence="17">
    <location>
        <begin position="134"/>
        <end position="155"/>
    </location>
</feature>
<feature type="helix" evidence="17">
    <location>
        <begin position="164"/>
        <end position="184"/>
    </location>
</feature>
<feature type="helix" evidence="16">
    <location>
        <begin position="220"/>
        <end position="261"/>
    </location>
</feature>
<organism>
    <name type="scientific">Mus musculus</name>
    <name type="common">Mouse</name>
    <dbReference type="NCBI Taxonomy" id="10090"/>
    <lineage>
        <taxon>Eukaryota</taxon>
        <taxon>Metazoa</taxon>
        <taxon>Chordata</taxon>
        <taxon>Craniata</taxon>
        <taxon>Vertebrata</taxon>
        <taxon>Euteleostomi</taxon>
        <taxon>Mammalia</taxon>
        <taxon>Eutheria</taxon>
        <taxon>Euarchontoglires</taxon>
        <taxon>Glires</taxon>
        <taxon>Rodentia</taxon>
        <taxon>Myomorpha</taxon>
        <taxon>Muroidea</taxon>
        <taxon>Muridae</taxon>
        <taxon>Murinae</taxon>
        <taxon>Mus</taxon>
        <taxon>Mus</taxon>
    </lineage>
</organism>
<evidence type="ECO:0000250" key="1">
    <source>
        <dbReference type="UniProtKB" id="Q96D96"/>
    </source>
</evidence>
<evidence type="ECO:0000255" key="2"/>
<evidence type="ECO:0000256" key="3">
    <source>
        <dbReference type="SAM" id="MobiDB-lite"/>
    </source>
</evidence>
<evidence type="ECO:0000269" key="4">
    <source>
    </source>
</evidence>
<evidence type="ECO:0000269" key="5">
    <source>
    </source>
</evidence>
<evidence type="ECO:0000269" key="6">
    <source>
    </source>
</evidence>
<evidence type="ECO:0000269" key="7">
    <source>
    </source>
</evidence>
<evidence type="ECO:0000269" key="8">
    <source>
    </source>
</evidence>
<evidence type="ECO:0000269" key="9">
    <source>
    </source>
</evidence>
<evidence type="ECO:0000269" key="10">
    <source>
    </source>
</evidence>
<evidence type="ECO:0000269" key="11">
    <source>
    </source>
</evidence>
<evidence type="ECO:0000303" key="12">
    <source>
    </source>
</evidence>
<evidence type="ECO:0000303" key="13">
    <source>
    </source>
</evidence>
<evidence type="ECO:0000305" key="14"/>
<evidence type="ECO:0000312" key="15">
    <source>
        <dbReference type="MGI" id="MGI:1921346"/>
    </source>
</evidence>
<evidence type="ECO:0007829" key="16">
    <source>
        <dbReference type="PDB" id="3VN0"/>
    </source>
</evidence>
<evidence type="ECO:0007829" key="17">
    <source>
        <dbReference type="PDB" id="3WKV"/>
    </source>
</evidence>
<dbReference type="EMBL" id="AK002854">
    <property type="protein sequence ID" value="BAB22409.1"/>
    <property type="molecule type" value="mRNA"/>
</dbReference>
<dbReference type="EMBL" id="AK154880">
    <property type="protein sequence ID" value="BAE32899.1"/>
    <property type="molecule type" value="mRNA"/>
</dbReference>
<dbReference type="EMBL" id="AK155123">
    <property type="protein sequence ID" value="BAE33062.1"/>
    <property type="molecule type" value="mRNA"/>
</dbReference>
<dbReference type="EMBL" id="AK170422">
    <property type="protein sequence ID" value="BAE41787.1"/>
    <property type="molecule type" value="mRNA"/>
</dbReference>
<dbReference type="EMBL" id="BC021548">
    <property type="protein sequence ID" value="AAH21548.1"/>
    <property type="molecule type" value="mRNA"/>
</dbReference>
<dbReference type="CCDS" id="CCDS19644.1"/>
<dbReference type="RefSeq" id="NP_001035954.1">
    <property type="nucleotide sequence ID" value="NM_001042489.2"/>
</dbReference>
<dbReference type="RefSeq" id="NP_001346383.1">
    <property type="nucleotide sequence ID" value="NM_001359454.1"/>
</dbReference>
<dbReference type="RefSeq" id="NP_083028.1">
    <property type="nucleotide sequence ID" value="NM_028752.3"/>
</dbReference>
<dbReference type="RefSeq" id="XP_006530535.1">
    <property type="nucleotide sequence ID" value="XM_006530472.4"/>
</dbReference>
<dbReference type="RefSeq" id="XP_006530536.1">
    <property type="nucleotide sequence ID" value="XM_006530473.1"/>
</dbReference>
<dbReference type="PDB" id="3VMX">
    <property type="method" value="X-ray"/>
    <property type="resolution" value="1.45 A"/>
    <property type="chains" value="A/B/C/D=220-266"/>
</dbReference>
<dbReference type="PDB" id="3VMY">
    <property type="method" value="X-ray"/>
    <property type="resolution" value="1.47 A"/>
    <property type="chains" value="A/B/C/D=220-269"/>
</dbReference>
<dbReference type="PDB" id="3VMZ">
    <property type="method" value="X-ray"/>
    <property type="resolution" value="1.55 A"/>
    <property type="chains" value="A/B/C/D=220-269"/>
</dbReference>
<dbReference type="PDB" id="3VN0">
    <property type="method" value="X-ray"/>
    <property type="resolution" value="1.37 A"/>
    <property type="chains" value="A/B/C/D=220-269"/>
</dbReference>
<dbReference type="PDB" id="3VYI">
    <property type="method" value="X-ray"/>
    <property type="resolution" value="2.30 A"/>
    <property type="chains" value="A/B/C/D/E/F/G/H/I/J/K/L=220-269"/>
</dbReference>
<dbReference type="PDB" id="3WKV">
    <property type="method" value="X-ray"/>
    <property type="resolution" value="3.45 A"/>
    <property type="chains" value="A=73-215"/>
</dbReference>
<dbReference type="PDBsum" id="3VMX"/>
<dbReference type="PDBsum" id="3VMY"/>
<dbReference type="PDBsum" id="3VMZ"/>
<dbReference type="PDBsum" id="3VN0"/>
<dbReference type="PDBsum" id="3VYI"/>
<dbReference type="PDBsum" id="3WKV"/>
<dbReference type="SMR" id="Q3U2S8"/>
<dbReference type="BioGRID" id="216489">
    <property type="interactions" value="1"/>
</dbReference>
<dbReference type="DIP" id="DIP-46134N"/>
<dbReference type="FunCoup" id="Q3U2S8">
    <property type="interactions" value="177"/>
</dbReference>
<dbReference type="STRING" id="10090.ENSMUSP00000098312"/>
<dbReference type="TCDB" id="1.A.51.1.1">
    <property type="family name" value="the voltage-gated proton channel (vpc) family"/>
</dbReference>
<dbReference type="iPTMnet" id="Q3U2S8"/>
<dbReference type="PhosphoSitePlus" id="Q3U2S8"/>
<dbReference type="PaxDb" id="10090-ENSMUSP00000072401"/>
<dbReference type="ProteomicsDB" id="273325"/>
<dbReference type="Pumba" id="Q3U2S8"/>
<dbReference type="TopDownProteomics" id="Q3U2S8"/>
<dbReference type="Antibodypedia" id="31051">
    <property type="antibodies" value="163 antibodies from 29 providers"/>
</dbReference>
<dbReference type="DNASU" id="74096"/>
<dbReference type="Ensembl" id="ENSMUST00000072602.14">
    <property type="protein sequence ID" value="ENSMUSP00000072401.8"/>
    <property type="gene ID" value="ENSMUSG00000064267.14"/>
</dbReference>
<dbReference type="Ensembl" id="ENSMUST00000100747.3">
    <property type="protein sequence ID" value="ENSMUSP00000098312.3"/>
    <property type="gene ID" value="ENSMUSG00000064267.14"/>
</dbReference>
<dbReference type="GeneID" id="74096"/>
<dbReference type="KEGG" id="mmu:74096"/>
<dbReference type="UCSC" id="uc008zku.2">
    <property type="organism name" value="mouse"/>
</dbReference>
<dbReference type="AGR" id="MGI:1921346"/>
<dbReference type="CTD" id="84329"/>
<dbReference type="MGI" id="MGI:1921346">
    <property type="gene designation" value="Hvcn1"/>
</dbReference>
<dbReference type="VEuPathDB" id="HostDB:ENSMUSG00000064267"/>
<dbReference type="eggNOG" id="ENOG502RX8B">
    <property type="taxonomic scope" value="Eukaryota"/>
</dbReference>
<dbReference type="GeneTree" id="ENSGT00940000159403"/>
<dbReference type="HOGENOM" id="CLU_076372_0_0_1"/>
<dbReference type="InParanoid" id="Q3U2S8"/>
<dbReference type="OMA" id="WEDEELH"/>
<dbReference type="OrthoDB" id="427456at2759"/>
<dbReference type="PhylomeDB" id="Q3U2S8"/>
<dbReference type="TreeFam" id="TF332056"/>
<dbReference type="Reactome" id="R-MMU-1222556">
    <property type="pathway name" value="ROS and RNS production in phagocytes"/>
</dbReference>
<dbReference type="Reactome" id="R-MMU-1300642">
    <property type="pathway name" value="Sperm Motility And Taxes"/>
</dbReference>
<dbReference type="Reactome" id="R-MMU-6798695">
    <property type="pathway name" value="Neutrophil degranulation"/>
</dbReference>
<dbReference type="BioGRID-ORCS" id="74096">
    <property type="hits" value="3 hits in 76 CRISPR screens"/>
</dbReference>
<dbReference type="ChiTaRS" id="Hvcn1">
    <property type="organism name" value="mouse"/>
</dbReference>
<dbReference type="EvolutionaryTrace" id="Q3U2S8"/>
<dbReference type="PRO" id="PR:Q3U2S8"/>
<dbReference type="Proteomes" id="UP000000589">
    <property type="component" value="Chromosome 5"/>
</dbReference>
<dbReference type="RNAct" id="Q3U2S8">
    <property type="molecule type" value="protein"/>
</dbReference>
<dbReference type="Bgee" id="ENSMUSG00000064267">
    <property type="expression patterns" value="Expressed in mesenteric lymph node and 108 other cell types or tissues"/>
</dbReference>
<dbReference type="ExpressionAtlas" id="Q3U2S8">
    <property type="expression patterns" value="baseline and differential"/>
</dbReference>
<dbReference type="GO" id="GO:0016324">
    <property type="term" value="C:apical plasma membrane"/>
    <property type="evidence" value="ECO:0007669"/>
    <property type="project" value="UniProtKB-SubCell"/>
</dbReference>
<dbReference type="GO" id="GO:0016020">
    <property type="term" value="C:membrane"/>
    <property type="evidence" value="ECO:0000305"/>
    <property type="project" value="HGNC-UCL"/>
</dbReference>
<dbReference type="GO" id="GO:0034702">
    <property type="term" value="C:monoatomic ion channel complex"/>
    <property type="evidence" value="ECO:0007669"/>
    <property type="project" value="UniProtKB-KW"/>
</dbReference>
<dbReference type="GO" id="GO:0030670">
    <property type="term" value="C:phagocytic vesicle membrane"/>
    <property type="evidence" value="ECO:0000314"/>
    <property type="project" value="UniProtKB"/>
</dbReference>
<dbReference type="GO" id="GO:0005886">
    <property type="term" value="C:plasma membrane"/>
    <property type="evidence" value="ECO:0000250"/>
    <property type="project" value="UniProtKB"/>
</dbReference>
<dbReference type="GO" id="GO:0036126">
    <property type="term" value="C:sperm flagellum"/>
    <property type="evidence" value="ECO:0000250"/>
    <property type="project" value="UniProtKB"/>
</dbReference>
<dbReference type="GO" id="GO:0042802">
    <property type="term" value="F:identical protein binding"/>
    <property type="evidence" value="ECO:0000353"/>
    <property type="project" value="IntAct"/>
</dbReference>
<dbReference type="GO" id="GO:0042803">
    <property type="term" value="F:protein homodimerization activity"/>
    <property type="evidence" value="ECO:0000314"/>
    <property type="project" value="UniProtKB"/>
</dbReference>
<dbReference type="GO" id="GO:0030171">
    <property type="term" value="F:voltage-gated proton channel activity"/>
    <property type="evidence" value="ECO:0000314"/>
    <property type="project" value="UniProtKB"/>
</dbReference>
<dbReference type="GO" id="GO:0071467">
    <property type="term" value="P:cellular response to pH"/>
    <property type="evidence" value="ECO:0000250"/>
    <property type="project" value="UniProtKB"/>
</dbReference>
<dbReference type="GO" id="GO:0071294">
    <property type="term" value="P:cellular response to zinc ion"/>
    <property type="evidence" value="ECO:0000250"/>
    <property type="project" value="UniProtKB"/>
</dbReference>
<dbReference type="GO" id="GO:0045087">
    <property type="term" value="P:innate immune response"/>
    <property type="evidence" value="ECO:0007669"/>
    <property type="project" value="UniProtKB-KW"/>
</dbReference>
<dbReference type="GO" id="GO:1902600">
    <property type="term" value="P:proton transmembrane transport"/>
    <property type="evidence" value="ECO:0000314"/>
    <property type="project" value="HGNC-UCL"/>
</dbReference>
<dbReference type="GO" id="GO:0060046">
    <property type="term" value="P:regulation of acrosome reaction"/>
    <property type="evidence" value="ECO:0007669"/>
    <property type="project" value="Ensembl"/>
</dbReference>
<dbReference type="GO" id="GO:0051453">
    <property type="term" value="P:regulation of intracellular pH"/>
    <property type="evidence" value="ECO:0000315"/>
    <property type="project" value="UniProtKB"/>
</dbReference>
<dbReference type="GO" id="GO:1903426">
    <property type="term" value="P:regulation of reactive oxygen species biosynthetic process"/>
    <property type="evidence" value="ECO:0000315"/>
    <property type="project" value="UniProtKB"/>
</dbReference>
<dbReference type="GO" id="GO:0009268">
    <property type="term" value="P:response to pH"/>
    <property type="evidence" value="ECO:0000314"/>
    <property type="project" value="HGNC-UCL"/>
</dbReference>
<dbReference type="GO" id="GO:0010043">
    <property type="term" value="P:response to zinc ion"/>
    <property type="evidence" value="ECO:0000314"/>
    <property type="project" value="HGNC-UCL"/>
</dbReference>
<dbReference type="FunFam" id="1.20.5.170:FF:000073">
    <property type="entry name" value="Voltage-gated hydrogen channel 1"/>
    <property type="match status" value="1"/>
</dbReference>
<dbReference type="FunFam" id="1.20.120.350:FF:000054">
    <property type="entry name" value="voltage-gated hydrogen channel 1"/>
    <property type="match status" value="1"/>
</dbReference>
<dbReference type="Gene3D" id="1.20.5.170">
    <property type="match status" value="1"/>
</dbReference>
<dbReference type="Gene3D" id="1.20.120.350">
    <property type="entry name" value="Voltage-gated potassium channels. Chain C"/>
    <property type="match status" value="1"/>
</dbReference>
<dbReference type="InterPro" id="IPR031846">
    <property type="entry name" value="Hvcn1"/>
</dbReference>
<dbReference type="InterPro" id="IPR005821">
    <property type="entry name" value="Ion_trans_dom"/>
</dbReference>
<dbReference type="InterPro" id="IPR031844">
    <property type="entry name" value="VGPC1_C"/>
</dbReference>
<dbReference type="InterPro" id="IPR027359">
    <property type="entry name" value="Volt_channel_dom_sf"/>
</dbReference>
<dbReference type="PANTHER" id="PTHR46480">
    <property type="entry name" value="F20B24.22"/>
    <property type="match status" value="1"/>
</dbReference>
<dbReference type="PANTHER" id="PTHR46480:SF1">
    <property type="entry name" value="VOLTAGE-GATED HYDROGEN CHANNEL 1"/>
    <property type="match status" value="1"/>
</dbReference>
<dbReference type="Pfam" id="PF00520">
    <property type="entry name" value="Ion_trans"/>
    <property type="match status" value="1"/>
</dbReference>
<dbReference type="Pfam" id="PF16799">
    <property type="entry name" value="VGPC1_C"/>
    <property type="match status" value="1"/>
</dbReference>
<dbReference type="SUPFAM" id="SSF81324">
    <property type="entry name" value="Voltage-gated potassium channels"/>
    <property type="match status" value="1"/>
</dbReference>
<reference key="1">
    <citation type="journal article" date="2005" name="Science">
        <title>The transcriptional landscape of the mammalian genome.</title>
        <authorList>
            <person name="Carninci P."/>
            <person name="Kasukawa T."/>
            <person name="Katayama S."/>
            <person name="Gough J."/>
            <person name="Frith M.C."/>
            <person name="Maeda N."/>
            <person name="Oyama R."/>
            <person name="Ravasi T."/>
            <person name="Lenhard B."/>
            <person name="Wells C."/>
            <person name="Kodzius R."/>
            <person name="Shimokawa K."/>
            <person name="Bajic V.B."/>
            <person name="Brenner S.E."/>
            <person name="Batalov S."/>
            <person name="Forrest A.R."/>
            <person name="Zavolan M."/>
            <person name="Davis M.J."/>
            <person name="Wilming L.G."/>
            <person name="Aidinis V."/>
            <person name="Allen J.E."/>
            <person name="Ambesi-Impiombato A."/>
            <person name="Apweiler R."/>
            <person name="Aturaliya R.N."/>
            <person name="Bailey T.L."/>
            <person name="Bansal M."/>
            <person name="Baxter L."/>
            <person name="Beisel K.W."/>
            <person name="Bersano T."/>
            <person name="Bono H."/>
            <person name="Chalk A.M."/>
            <person name="Chiu K.P."/>
            <person name="Choudhary V."/>
            <person name="Christoffels A."/>
            <person name="Clutterbuck D.R."/>
            <person name="Crowe M.L."/>
            <person name="Dalla E."/>
            <person name="Dalrymple B.P."/>
            <person name="de Bono B."/>
            <person name="Della Gatta G."/>
            <person name="di Bernardo D."/>
            <person name="Down T."/>
            <person name="Engstrom P."/>
            <person name="Fagiolini M."/>
            <person name="Faulkner G."/>
            <person name="Fletcher C.F."/>
            <person name="Fukushima T."/>
            <person name="Furuno M."/>
            <person name="Futaki S."/>
            <person name="Gariboldi M."/>
            <person name="Georgii-Hemming P."/>
            <person name="Gingeras T.R."/>
            <person name="Gojobori T."/>
            <person name="Green R.E."/>
            <person name="Gustincich S."/>
            <person name="Harbers M."/>
            <person name="Hayashi Y."/>
            <person name="Hensch T.K."/>
            <person name="Hirokawa N."/>
            <person name="Hill D."/>
            <person name="Huminiecki L."/>
            <person name="Iacono M."/>
            <person name="Ikeo K."/>
            <person name="Iwama A."/>
            <person name="Ishikawa T."/>
            <person name="Jakt M."/>
            <person name="Kanapin A."/>
            <person name="Katoh M."/>
            <person name="Kawasawa Y."/>
            <person name="Kelso J."/>
            <person name="Kitamura H."/>
            <person name="Kitano H."/>
            <person name="Kollias G."/>
            <person name="Krishnan S.P."/>
            <person name="Kruger A."/>
            <person name="Kummerfeld S.K."/>
            <person name="Kurochkin I.V."/>
            <person name="Lareau L.F."/>
            <person name="Lazarevic D."/>
            <person name="Lipovich L."/>
            <person name="Liu J."/>
            <person name="Liuni S."/>
            <person name="McWilliam S."/>
            <person name="Madan Babu M."/>
            <person name="Madera M."/>
            <person name="Marchionni L."/>
            <person name="Matsuda H."/>
            <person name="Matsuzawa S."/>
            <person name="Miki H."/>
            <person name="Mignone F."/>
            <person name="Miyake S."/>
            <person name="Morris K."/>
            <person name="Mottagui-Tabar S."/>
            <person name="Mulder N."/>
            <person name="Nakano N."/>
            <person name="Nakauchi H."/>
            <person name="Ng P."/>
            <person name="Nilsson R."/>
            <person name="Nishiguchi S."/>
            <person name="Nishikawa S."/>
            <person name="Nori F."/>
            <person name="Ohara O."/>
            <person name="Okazaki Y."/>
            <person name="Orlando V."/>
            <person name="Pang K.C."/>
            <person name="Pavan W.J."/>
            <person name="Pavesi G."/>
            <person name="Pesole G."/>
            <person name="Petrovsky N."/>
            <person name="Piazza S."/>
            <person name="Reed J."/>
            <person name="Reid J.F."/>
            <person name="Ring B.Z."/>
            <person name="Ringwald M."/>
            <person name="Rost B."/>
            <person name="Ruan Y."/>
            <person name="Salzberg S.L."/>
            <person name="Sandelin A."/>
            <person name="Schneider C."/>
            <person name="Schoenbach C."/>
            <person name="Sekiguchi K."/>
            <person name="Semple C.A."/>
            <person name="Seno S."/>
            <person name="Sessa L."/>
            <person name="Sheng Y."/>
            <person name="Shibata Y."/>
            <person name="Shimada H."/>
            <person name="Shimada K."/>
            <person name="Silva D."/>
            <person name="Sinclair B."/>
            <person name="Sperling S."/>
            <person name="Stupka E."/>
            <person name="Sugiura K."/>
            <person name="Sultana R."/>
            <person name="Takenaka Y."/>
            <person name="Taki K."/>
            <person name="Tammoja K."/>
            <person name="Tan S.L."/>
            <person name="Tang S."/>
            <person name="Taylor M.S."/>
            <person name="Tegner J."/>
            <person name="Teichmann S.A."/>
            <person name="Ueda H.R."/>
            <person name="van Nimwegen E."/>
            <person name="Verardo R."/>
            <person name="Wei C.L."/>
            <person name="Yagi K."/>
            <person name="Yamanishi H."/>
            <person name="Zabarovsky E."/>
            <person name="Zhu S."/>
            <person name="Zimmer A."/>
            <person name="Hide W."/>
            <person name="Bult C."/>
            <person name="Grimmond S.M."/>
            <person name="Teasdale R.D."/>
            <person name="Liu E.T."/>
            <person name="Brusic V."/>
            <person name="Quackenbush J."/>
            <person name="Wahlestedt C."/>
            <person name="Mattick J.S."/>
            <person name="Hume D.A."/>
            <person name="Kai C."/>
            <person name="Sasaki D."/>
            <person name="Tomaru Y."/>
            <person name="Fukuda S."/>
            <person name="Kanamori-Katayama M."/>
            <person name="Suzuki M."/>
            <person name="Aoki J."/>
            <person name="Arakawa T."/>
            <person name="Iida J."/>
            <person name="Imamura K."/>
            <person name="Itoh M."/>
            <person name="Kato T."/>
            <person name="Kawaji H."/>
            <person name="Kawagashira N."/>
            <person name="Kawashima T."/>
            <person name="Kojima M."/>
            <person name="Kondo S."/>
            <person name="Konno H."/>
            <person name="Nakano K."/>
            <person name="Ninomiya N."/>
            <person name="Nishio T."/>
            <person name="Okada M."/>
            <person name="Plessy C."/>
            <person name="Shibata K."/>
            <person name="Shiraki T."/>
            <person name="Suzuki S."/>
            <person name="Tagami M."/>
            <person name="Waki K."/>
            <person name="Watahiki A."/>
            <person name="Okamura-Oho Y."/>
            <person name="Suzuki H."/>
            <person name="Kawai J."/>
            <person name="Hayashizaki Y."/>
        </authorList>
    </citation>
    <scope>NUCLEOTIDE SEQUENCE [LARGE SCALE MRNA]</scope>
    <source>
        <strain>C57BL/6J</strain>
        <strain>NOD</strain>
        <tissue>Kidney</tissue>
    </source>
</reference>
<reference key="2">
    <citation type="journal article" date="2004" name="Genome Res.">
        <title>The status, quality, and expansion of the NIH full-length cDNA project: the Mammalian Gene Collection (MGC).</title>
        <authorList>
            <consortium name="The MGC Project Team"/>
        </authorList>
    </citation>
    <scope>NUCLEOTIDE SEQUENCE [LARGE SCALE MRNA]</scope>
    <source>
        <strain>FVB/N</strain>
        <tissue>Salivary gland</tissue>
    </source>
</reference>
<reference key="3">
    <citation type="journal article" date="2006" name="Science">
        <title>A voltage sensor-domain protein is a voltage-gated proton channel.</title>
        <authorList>
            <person name="Sasaki M."/>
            <person name="Takagi M."/>
            <person name="Okamura Y."/>
        </authorList>
    </citation>
    <scope>FUNCTION</scope>
    <scope>TRANSPORTER ACTIVITY</scope>
    <scope>ACTIVITY REGULATION</scope>
    <scope>SUBCELLULAR LOCATION</scope>
    <scope>TISSUE SPECIFICITY</scope>
    <scope>DOMAIN</scope>
    <scope>MUTAGENESIS OF ARG-201 AND ARG-207</scope>
</reference>
<reference key="4">
    <citation type="journal article" date="2009" name="Proc. Natl. Acad. Sci. U.S.A.">
        <title>Voltage-gated proton channels maintain pH in human neutrophils during phagocytosis.</title>
        <authorList>
            <person name="Morgan D."/>
            <person name="Capasso M."/>
            <person name="Musset B."/>
            <person name="Cherny V.V."/>
            <person name="Rios E."/>
            <person name="Dyer M.J."/>
            <person name="DeCoursey T.E."/>
        </authorList>
    </citation>
    <scope>FUNCTION</scope>
    <scope>TRANSPORTER ACTIVITY</scope>
    <scope>ACTIVITY REGULATION</scope>
</reference>
<reference key="5">
    <citation type="journal article" date="2010" name="Cell">
        <title>A tissue-specific atlas of mouse protein phosphorylation and expression.</title>
        <authorList>
            <person name="Huttlin E.L."/>
            <person name="Jedrychowski M.P."/>
            <person name="Elias J.E."/>
            <person name="Goswami T."/>
            <person name="Rad R."/>
            <person name="Beausoleil S.A."/>
            <person name="Villen J."/>
            <person name="Haas W."/>
            <person name="Sowa M.E."/>
            <person name="Gygi S.P."/>
        </authorList>
    </citation>
    <scope>IDENTIFICATION BY MASS SPECTROMETRY [LARGE SCALE ANALYSIS]</scope>
    <source>
        <tissue>Spleen</tissue>
    </source>
</reference>
<reference key="6">
    <citation type="journal article" date="2010" name="J. Exp. Med.">
        <title>VSOP/Hv1 proton channels sustain calcium entry, neutrophil migration, and superoxide production by limiting cell depolarization and acidification.</title>
        <authorList>
            <person name="El Chemaly A."/>
            <person name="Okochi Y."/>
            <person name="Sasaki M."/>
            <person name="Arnaudeau S."/>
            <person name="Okamura Y."/>
            <person name="Demaurex N."/>
        </authorList>
    </citation>
    <scope>FUNCTION</scope>
</reference>
<reference key="7">
    <citation type="journal article" date="2014" name="J. Leukoc. Biol.">
        <title>Hv1 proton channels differentially regulate the pH of neutrophil and macrophage phagosomes by sustaining the production of phagosomal ROS that inhibit the delivery of vacuolar ATPases.</title>
        <authorList>
            <person name="El Chemaly A."/>
            <person name="Nunes P."/>
            <person name="Jimaja W."/>
            <person name="Castelbou C."/>
            <person name="Demaurex N."/>
        </authorList>
    </citation>
    <scope>FUNCTION</scope>
    <scope>SUBCELLULAR LOCATION</scope>
</reference>
<reference key="8">
    <citation type="journal article" date="2023" name="Nat. Commun.">
        <title>Control of intracellular pH and bicarbonate by CO2 diffusion into human sperm.</title>
        <authorList>
            <person name="Grahn E."/>
            <person name="Kaufmann S.V."/>
            <person name="Askarova M."/>
            <person name="Ninov M."/>
            <person name="Welp L.M."/>
            <person name="Berger T.K."/>
            <person name="Urlaub H."/>
            <person name="Kaupp U.B."/>
        </authorList>
    </citation>
    <scope>CAUTION</scope>
</reference>
<reference key="9">
    <citation type="journal article" date="2012" name="Nat. Commun.">
        <title>The cytoplasmic coiled-coil mediates cooperative gating temperature sensitivity in the voltage-gated H(+) channel Hv1.</title>
        <authorList>
            <person name="Fujiwara Y."/>
            <person name="Kurokawa T."/>
            <person name="Takeshita K."/>
            <person name="Kobayashi M."/>
            <person name="Okochi Y."/>
            <person name="Nakagawa A."/>
            <person name="Okamura Y."/>
        </authorList>
    </citation>
    <scope>X-RAY CRYSTALLOGRAPHY (1.45 ANGSTROMS) OF 220-266</scope>
    <scope>FUNCTION</scope>
    <scope>TRANSPORTER ACTIVITY</scope>
    <scope>ACTIVITY REGULATION</scope>
    <scope>SUBUNIT</scope>
    <scope>COILED COIL</scope>
    <scope>MUTAGENESIS OF ASN-231; 216-VAL--THR-218 AND 230-ILE--ILE-232</scope>
</reference>
<reference key="10">
    <citation type="journal article" date="2013" name="J. Physiol. (Lond.)">
        <title>Gating of the designed trimeric/tetrameric voltage-gated H+ channel.</title>
        <authorList>
            <person name="Fujiwara Y."/>
            <person name="Kurokawa T."/>
            <person name="Takeshita K."/>
            <person name="Nakagawa A."/>
            <person name="Larsson H.P."/>
            <person name="Okamura Y."/>
        </authorList>
    </citation>
    <scope>X-RAY CRYSTALLOGRAPHY (2.30 ANGSTROMS) OF 220-269</scope>
    <scope>FUNCTION</scope>
    <scope>TRANSPORTER ACTIVITY</scope>
    <scope>SUBUNIT</scope>
    <scope>COILED COIL</scope>
</reference>
<reference key="11">
    <citation type="journal article" date="2014" name="Nat. Struct. Mol. Biol.">
        <title>X-ray crystal structure of voltage-gated proton channel.</title>
        <authorList>
            <person name="Takeshita K."/>
            <person name="Sakata S."/>
            <person name="Yamashita E."/>
            <person name="Fujiwara Y."/>
            <person name="Kawanabe A."/>
            <person name="Kurokawa T."/>
            <person name="Okochi Y."/>
            <person name="Matsuda M."/>
            <person name="Narita H."/>
            <person name="Okamura Y."/>
            <person name="Nakagawa A."/>
        </authorList>
    </citation>
    <scope>X-RAY CRYSTALLOGRAPHY (3.45 ANGSTROMS) OF 73-215</scope>
    <scope>FUNCTION</scope>
    <scope>TRANSPORTER ACTIVITY</scope>
    <scope>ACTIVITY REGULATION</scope>
    <scope>SUBUNIT</scope>
    <scope>TOPOLOGY</scope>
</reference>
<sequence length="269" mass="31242">MTSHDPKAVTRRTKVAPTKRMSRFLKHFTVVGDDYHTWNVNYKKWENEEEEEEPAPTSAEGEGNAEGPDAEAGSASTPRQSLDFRSRLRKLFSSHRFQVIIICLVVLDALLVLAELLLDLKIIEPDEQDYAVTAFHYMSFAILVFFMLEIFFKIFVFRLEFFHHKFEILDAFVVVVSFVLDLVLLFKSHHFEALGLLILLRLWRVARIINGIIISVKTRSERQILRLKQINIQLATKIQHLEFSCSEKEQEIERLNKLLKQNGLLGDVN</sequence>
<proteinExistence type="evidence at protein level"/>
<gene>
    <name evidence="15" type="primary">Hvcn1</name>
    <name type="synonym">Bts</name>
    <name type="synonym">Vsop</name>
</gene>
<keyword id="KW-0002">3D-structure</keyword>
<keyword id="KW-1003">Cell membrane</keyword>
<keyword id="KW-0966">Cell projection</keyword>
<keyword id="KW-0969">Cilium</keyword>
<keyword id="KW-0175">Coiled coil</keyword>
<keyword id="KW-0968">Cytoplasmic vesicle</keyword>
<keyword id="KW-0282">Flagellum</keyword>
<keyword id="KW-0375">Hydrogen ion transport</keyword>
<keyword id="KW-0391">Immunity</keyword>
<keyword id="KW-0399">Innate immunity</keyword>
<keyword id="KW-0407">Ion channel</keyword>
<keyword id="KW-0406">Ion transport</keyword>
<keyword id="KW-0472">Membrane</keyword>
<keyword id="KW-0597">Phosphoprotein</keyword>
<keyword id="KW-1185">Reference proteome</keyword>
<keyword id="KW-0812">Transmembrane</keyword>
<keyword id="KW-1133">Transmembrane helix</keyword>
<keyword id="KW-0813">Transport</keyword>
<keyword id="KW-0851">Voltage-gated channel</keyword>
<name>HVCN1_MOUSE</name>
<accession>Q3U2S8</accession>
<accession>Q9DCE4</accession>
<comment type="function">
    <text evidence="1 4 5 6 7 8 9 10">Voltage-gated proton-selective channel that conducts outward proton currents in response to intracellular acidification. Lacks a canonical ion-channel pore domain and mediates proton permeability via its voltage sensor domain (PubMed:16556803, PubMed:19805063, PubMed:22569364, PubMed:23165764, PubMed:24584463). Provides for proton efflux that compensates for electron charge generated by NADPH oxidase activity either in the extracellular or phagosomal compartments, thus enabling the production of high levels of bactericidal reactive oxygen species during the respiratory burst (PubMed:19805063, PubMed:20026664, PubMed:24415791). Opens when the pH of airway surface liquid exceeds 7 and contributes to respiratory epithelial acid secretion to maintain pH in the mucosa (By similarity).</text>
</comment>
<comment type="catalytic activity">
    <reaction evidence="4 5 7 8 10">
        <text>H(+)(in) = H(+)(out)</text>
        <dbReference type="Rhea" id="RHEA:34979"/>
        <dbReference type="ChEBI" id="CHEBI:15378"/>
    </reaction>
    <physiologicalReaction direction="left-to-right" evidence="4 5 7 8">
        <dbReference type="Rhea" id="RHEA:34980"/>
    </physiologicalReaction>
</comment>
<comment type="activity regulation">
    <text evidence="4 5 7 10">The dimers display cooperative channel gating. The channel activity is inhibited by zinc ions.</text>
</comment>
<comment type="subunit">
    <text evidence="7 8 10">Homodimer; each protomer forms its own proton conduction pathway.</text>
</comment>
<comment type="interaction">
    <interactant intactId="EBI-8401579">
        <id>Q3U2S8</id>
    </interactant>
    <interactant intactId="EBI-8401579">
        <id>Q3U2S8</id>
        <label>Hvcn1</label>
    </interactant>
    <organismsDiffer>false</organismsDiffer>
    <experiments>3</experiments>
</comment>
<comment type="subcellular location">
    <subcellularLocation>
        <location evidence="1">Cell membrane</location>
        <topology evidence="2">Multi-pass membrane protein</topology>
    </subcellularLocation>
    <subcellularLocation>
        <location evidence="1">Apical cell membrane</location>
        <topology evidence="2">Multi-pass membrane protein</topology>
    </subcellularLocation>
    <subcellularLocation>
        <location evidence="9">Cytoplasmic vesicle</location>
        <location evidence="9">Phagosome membrane</location>
        <topology evidence="2">Multi-pass membrane protein</topology>
    </subcellularLocation>
    <subcellularLocation>
        <location evidence="1">Cell projection</location>
        <location evidence="1">Cilium</location>
        <location evidence="1">Flagellum membrane</location>
        <topology evidence="2">Multi-pass membrane protein</topology>
    </subcellularLocation>
    <text evidence="1">Detected within the principal piece of the sperm flagellum.</text>
</comment>
<comment type="tissue specificity">
    <text evidence="4">Enriched in immune tissues, such as bone marrow, macrophages and spleen.</text>
</comment>
<comment type="domain">
    <text evidence="4">The voltage sensor domain (VSD, segments S1-S4) conducts both gating and ion permeation. The segment S4 is probably the voltage-sensor and is characterized by a series of positively charged amino acids at every third position. Unlike other voltage-gated ion channels it lacks the pore domain.</text>
</comment>
<comment type="domain">
    <text evidence="4">The C-terminal coiled coil region mediates homodimerization and cooperative channel gating. It is essential for normal subcellular localization.</text>
</comment>
<comment type="PTM">
    <text evidence="1">Phosphorylated in vitro by PRKCD. Phosphorylation may enhance channel gating.</text>
</comment>
<comment type="similarity">
    <text evidence="14">Belongs to the voltage-gated proton channel (VPC) (TC 1.A.51) family.</text>
</comment>
<comment type="caution">
    <text evidence="11">HVCN1 proton currents are missing in mouse sperm.</text>
</comment>
<protein>
    <recommendedName>
        <fullName>Voltage-gated hydrogen channel 1</fullName>
    </recommendedName>
    <alternativeName>
        <fullName>Hydrogen voltage-gated channel 1</fullName>
        <shortName evidence="13">HV1</shortName>
    </alternativeName>
    <alternativeName>
        <fullName evidence="12">Voltage sensor domain-only protein</fullName>
        <shortName evidence="12">mVSOP</shortName>
    </alternativeName>
</protein>